<protein>
    <recommendedName>
        <fullName>RNA polymerase sigma-54 factor</fullName>
    </recommendedName>
</protein>
<gene>
    <name type="primary">rpoN</name>
    <name type="synonym">ntrA</name>
</gene>
<reference key="1">
    <citation type="journal article" date="1994" name="J. Bacteriol.">
        <title>RpoN (sigma 54) is required for conversion of phenol to catechol in Acinetobacter calcoaceticus.</title>
        <authorList>
            <person name="Ehrt S."/>
            <person name="Ornston L.N."/>
            <person name="Hillen W."/>
        </authorList>
    </citation>
    <scope>NUCLEOTIDE SEQUENCE [GENOMIC DNA]</scope>
    <source>
        <strain>ATCC 11171 / DSM 590 / CCUG 2491 / LMG 988 / NCIMB 8250 / CIP 63.46 / B94</strain>
    </source>
</reference>
<evidence type="ECO:0000255" key="1"/>
<evidence type="ECO:0000256" key="2">
    <source>
        <dbReference type="SAM" id="MobiDB-lite"/>
    </source>
</evidence>
<evidence type="ECO:0000305" key="3"/>
<accession>P33983</accession>
<feature type="chain" id="PRO_0000205520" description="RNA polymerase sigma-54 factor">
    <location>
        <begin position="1"/>
        <end position="482"/>
    </location>
</feature>
<feature type="DNA-binding region" description="H-T-H motif" evidence="1">
    <location>
        <begin position="371"/>
        <end position="390"/>
    </location>
</feature>
<feature type="region of interest" description="Disordered" evidence="2">
    <location>
        <begin position="50"/>
        <end position="69"/>
    </location>
</feature>
<feature type="short sequence motif" description="RPON box">
    <location>
        <begin position="459"/>
        <end position="467"/>
    </location>
</feature>
<feature type="compositionally biased region" description="Basic and acidic residues" evidence="2">
    <location>
        <begin position="55"/>
        <end position="65"/>
    </location>
</feature>
<name>RP54_ACIGI</name>
<sequence>MKLSVGLKVANSLSLTPQLQQAIRLLQLSSLELEQEIQIQLDSNPLLEKVEEETHESPENVKQEQQEYELSDSLNANHLPDELPVDTDWDDVYTHQSTAMERPEFEDREDNRHSEASLKEHMLGQVNLLHFSPVDKLIAYCIVDALDEKGFLAADIEEIVSSVQHLLQQMDYDIEVEEDEVLVVLKHIQRLEPIGIGARSLAECLFVQIEALATTTLFRKEALMLLKHYELLVSNDLNKLIKQTGLNAELLKSAIDLLKTLKPYPGAEFEQKESDYQIPDVMVSKKNDHWYVQLNPDILPKLRINSFYSGMIKRADQSDDNQYLRNQMLEAKNFIKSVDERHKTLLKVASCIVQHQREFLEIGAEGMKPLVLRDVAEEVELHESTVSRVTTNKFLLTPRGLFELKYFFSSHVGTTSGGEASSTAIRAKIKKLVADENPRKPLSDNTIANLLKEEGIDVARRTVAKYRESLHIPSSSDRKVLI</sequence>
<organism>
    <name type="scientific">Acinetobacter guillouiae</name>
    <name type="common">Acinetobacter genomosp. 11</name>
    <dbReference type="NCBI Taxonomy" id="106649"/>
    <lineage>
        <taxon>Bacteria</taxon>
        <taxon>Pseudomonadati</taxon>
        <taxon>Pseudomonadota</taxon>
        <taxon>Gammaproteobacteria</taxon>
        <taxon>Moraxellales</taxon>
        <taxon>Moraxellaceae</taxon>
        <taxon>Acinetobacter</taxon>
    </lineage>
</organism>
<comment type="function">
    <text>Sigma factors are initiation factors that promote the attachment of RNA polymerase to specific initiation sites and are then released.</text>
</comment>
<comment type="similarity">
    <text evidence="3">Belongs to the sigma-54 factor family.</text>
</comment>
<comment type="sequence caution" evidence="3">
    <conflict type="erroneous initiation">
        <sequence resource="EMBL-CDS" id="AAA21615"/>
    </conflict>
</comment>
<dbReference type="EMBL" id="L26051">
    <property type="protein sequence ID" value="AAA21615.1"/>
    <property type="status" value="ALT_INIT"/>
    <property type="molecule type" value="Genomic_DNA"/>
</dbReference>
<dbReference type="RefSeq" id="WP_004723732.1">
    <property type="nucleotide sequence ID" value="NZ_VZOG01000042.1"/>
</dbReference>
<dbReference type="SMR" id="P33983"/>
<dbReference type="STRING" id="106649.GCA_000829655_01554"/>
<dbReference type="GO" id="GO:0000428">
    <property type="term" value="C:DNA-directed RNA polymerase complex"/>
    <property type="evidence" value="ECO:0007669"/>
    <property type="project" value="UniProtKB-KW"/>
</dbReference>
<dbReference type="GO" id="GO:0003677">
    <property type="term" value="F:DNA binding"/>
    <property type="evidence" value="ECO:0007669"/>
    <property type="project" value="UniProtKB-KW"/>
</dbReference>
<dbReference type="GO" id="GO:0001216">
    <property type="term" value="F:DNA-binding transcription activator activity"/>
    <property type="evidence" value="ECO:0007669"/>
    <property type="project" value="InterPro"/>
</dbReference>
<dbReference type="GO" id="GO:0016779">
    <property type="term" value="F:nucleotidyltransferase activity"/>
    <property type="evidence" value="ECO:0007669"/>
    <property type="project" value="UniProtKB-KW"/>
</dbReference>
<dbReference type="GO" id="GO:0016987">
    <property type="term" value="F:sigma factor activity"/>
    <property type="evidence" value="ECO:0007669"/>
    <property type="project" value="UniProtKB-KW"/>
</dbReference>
<dbReference type="GO" id="GO:0006352">
    <property type="term" value="P:DNA-templated transcription initiation"/>
    <property type="evidence" value="ECO:0007669"/>
    <property type="project" value="InterPro"/>
</dbReference>
<dbReference type="Gene3D" id="1.10.10.60">
    <property type="entry name" value="Homeodomain-like"/>
    <property type="match status" value="1"/>
</dbReference>
<dbReference type="Gene3D" id="1.10.10.1330">
    <property type="entry name" value="RNA polymerase sigma-54 factor, core-binding domain"/>
    <property type="match status" value="1"/>
</dbReference>
<dbReference type="InterPro" id="IPR000394">
    <property type="entry name" value="RNA_pol_sigma_54"/>
</dbReference>
<dbReference type="InterPro" id="IPR007046">
    <property type="entry name" value="RNA_pol_sigma_54_core-bd"/>
</dbReference>
<dbReference type="InterPro" id="IPR007634">
    <property type="entry name" value="RNA_pol_sigma_54_DNA-bd"/>
</dbReference>
<dbReference type="InterPro" id="IPR038709">
    <property type="entry name" value="RpoN_core-bd_sf"/>
</dbReference>
<dbReference type="NCBIfam" id="NF004595">
    <property type="entry name" value="PRK05932.1-2"/>
    <property type="match status" value="1"/>
</dbReference>
<dbReference type="NCBIfam" id="NF009118">
    <property type="entry name" value="PRK12469.1"/>
    <property type="match status" value="1"/>
</dbReference>
<dbReference type="NCBIfam" id="TIGR02395">
    <property type="entry name" value="rpoN_sigma"/>
    <property type="match status" value="1"/>
</dbReference>
<dbReference type="PANTHER" id="PTHR32248">
    <property type="entry name" value="RNA POLYMERASE SIGMA-54 FACTOR"/>
    <property type="match status" value="1"/>
</dbReference>
<dbReference type="PANTHER" id="PTHR32248:SF4">
    <property type="entry name" value="RNA POLYMERASE SIGMA-54 FACTOR"/>
    <property type="match status" value="1"/>
</dbReference>
<dbReference type="Pfam" id="PF00309">
    <property type="entry name" value="Sigma54_AID"/>
    <property type="match status" value="1"/>
</dbReference>
<dbReference type="Pfam" id="PF04963">
    <property type="entry name" value="Sigma54_CBD"/>
    <property type="match status" value="1"/>
</dbReference>
<dbReference type="Pfam" id="PF04552">
    <property type="entry name" value="Sigma54_DBD"/>
    <property type="match status" value="1"/>
</dbReference>
<dbReference type="PIRSF" id="PIRSF000774">
    <property type="entry name" value="RpoN"/>
    <property type="match status" value="1"/>
</dbReference>
<dbReference type="PRINTS" id="PR00045">
    <property type="entry name" value="SIGMA54FCT"/>
</dbReference>
<dbReference type="PROSITE" id="PS00717">
    <property type="entry name" value="SIGMA54_1"/>
    <property type="match status" value="1"/>
</dbReference>
<dbReference type="PROSITE" id="PS00718">
    <property type="entry name" value="SIGMA54_2"/>
    <property type="match status" value="1"/>
</dbReference>
<dbReference type="PROSITE" id="PS50044">
    <property type="entry name" value="SIGMA54_3"/>
    <property type="match status" value="1"/>
</dbReference>
<keyword id="KW-0238">DNA-binding</keyword>
<keyword id="KW-0240">DNA-directed RNA polymerase</keyword>
<keyword id="KW-0548">Nucleotidyltransferase</keyword>
<keyword id="KW-0731">Sigma factor</keyword>
<keyword id="KW-0804">Transcription</keyword>
<keyword id="KW-0805">Transcription regulation</keyword>
<keyword id="KW-0808">Transferase</keyword>
<proteinExistence type="inferred from homology"/>